<reference key="1">
    <citation type="journal article" date="2003" name="Proc. Natl. Acad. Sci. U.S.A.">
        <title>Genome sequence of the cyanobacterium Prochlorococcus marinus SS120, a nearly minimal oxyphototrophic genome.</title>
        <authorList>
            <person name="Dufresne A."/>
            <person name="Salanoubat M."/>
            <person name="Partensky F."/>
            <person name="Artiguenave F."/>
            <person name="Axmann I.M."/>
            <person name="Barbe V."/>
            <person name="Duprat S."/>
            <person name="Galperin M.Y."/>
            <person name="Koonin E.V."/>
            <person name="Le Gall F."/>
            <person name="Makarova K.S."/>
            <person name="Ostrowski M."/>
            <person name="Oztas S."/>
            <person name="Robert C."/>
            <person name="Rogozin I.B."/>
            <person name="Scanlan D.J."/>
            <person name="Tandeau de Marsac N."/>
            <person name="Weissenbach J."/>
            <person name="Wincker P."/>
            <person name="Wolf Y.I."/>
            <person name="Hess W.R."/>
        </authorList>
    </citation>
    <scope>NUCLEOTIDE SEQUENCE [LARGE SCALE GENOMIC DNA]</scope>
    <source>
        <strain>SARG / CCMP1375 / SS120</strain>
    </source>
</reference>
<protein>
    <recommendedName>
        <fullName evidence="1">ATP-dependent Clp protease proteolytic subunit 3</fullName>
        <ecNumber evidence="1">3.4.21.92</ecNumber>
    </recommendedName>
    <alternativeName>
        <fullName evidence="1">Endopeptidase Clp 3</fullName>
    </alternativeName>
</protein>
<proteinExistence type="inferred from homology"/>
<dbReference type="EC" id="3.4.21.92" evidence="1"/>
<dbReference type="EMBL" id="AE017126">
    <property type="protein sequence ID" value="AAQ00860.1"/>
    <property type="molecule type" value="Genomic_DNA"/>
</dbReference>
<dbReference type="RefSeq" id="NP_876207.1">
    <property type="nucleotide sequence ID" value="NC_005042.1"/>
</dbReference>
<dbReference type="SMR" id="Q7V9L6"/>
<dbReference type="STRING" id="167539.Pro_1816"/>
<dbReference type="MEROPS" id="S14.001"/>
<dbReference type="EnsemblBacteria" id="AAQ00860">
    <property type="protein sequence ID" value="AAQ00860"/>
    <property type="gene ID" value="Pro_1816"/>
</dbReference>
<dbReference type="KEGG" id="pma:Pro_1816"/>
<dbReference type="PATRIC" id="fig|167539.5.peg.1918"/>
<dbReference type="eggNOG" id="COG0740">
    <property type="taxonomic scope" value="Bacteria"/>
</dbReference>
<dbReference type="HOGENOM" id="CLU_058707_3_2_3"/>
<dbReference type="OrthoDB" id="571524at2"/>
<dbReference type="Proteomes" id="UP000001420">
    <property type="component" value="Chromosome"/>
</dbReference>
<dbReference type="GO" id="GO:0005737">
    <property type="term" value="C:cytoplasm"/>
    <property type="evidence" value="ECO:0007669"/>
    <property type="project" value="UniProtKB-SubCell"/>
</dbReference>
<dbReference type="GO" id="GO:0009368">
    <property type="term" value="C:endopeptidase Clp complex"/>
    <property type="evidence" value="ECO:0007669"/>
    <property type="project" value="TreeGrafter"/>
</dbReference>
<dbReference type="GO" id="GO:0004176">
    <property type="term" value="F:ATP-dependent peptidase activity"/>
    <property type="evidence" value="ECO:0007669"/>
    <property type="project" value="InterPro"/>
</dbReference>
<dbReference type="GO" id="GO:0051117">
    <property type="term" value="F:ATPase binding"/>
    <property type="evidence" value="ECO:0007669"/>
    <property type="project" value="TreeGrafter"/>
</dbReference>
<dbReference type="GO" id="GO:0004252">
    <property type="term" value="F:serine-type endopeptidase activity"/>
    <property type="evidence" value="ECO:0007669"/>
    <property type="project" value="UniProtKB-UniRule"/>
</dbReference>
<dbReference type="GO" id="GO:0006515">
    <property type="term" value="P:protein quality control for misfolded or incompletely synthesized proteins"/>
    <property type="evidence" value="ECO:0007669"/>
    <property type="project" value="TreeGrafter"/>
</dbReference>
<dbReference type="CDD" id="cd07017">
    <property type="entry name" value="S14_ClpP_2"/>
    <property type="match status" value="1"/>
</dbReference>
<dbReference type="FunFam" id="3.90.226.10:FF:000001">
    <property type="entry name" value="ATP-dependent Clp protease proteolytic subunit"/>
    <property type="match status" value="1"/>
</dbReference>
<dbReference type="Gene3D" id="3.90.226.10">
    <property type="entry name" value="2-enoyl-CoA Hydratase, Chain A, domain 1"/>
    <property type="match status" value="1"/>
</dbReference>
<dbReference type="HAMAP" id="MF_00444">
    <property type="entry name" value="ClpP"/>
    <property type="match status" value="1"/>
</dbReference>
<dbReference type="InterPro" id="IPR001907">
    <property type="entry name" value="ClpP"/>
</dbReference>
<dbReference type="InterPro" id="IPR029045">
    <property type="entry name" value="ClpP/crotonase-like_dom_sf"/>
</dbReference>
<dbReference type="InterPro" id="IPR023562">
    <property type="entry name" value="ClpP/TepA"/>
</dbReference>
<dbReference type="InterPro" id="IPR033135">
    <property type="entry name" value="ClpP_His_AS"/>
</dbReference>
<dbReference type="NCBIfam" id="TIGR00493">
    <property type="entry name" value="clpP"/>
    <property type="match status" value="1"/>
</dbReference>
<dbReference type="NCBIfam" id="NF001368">
    <property type="entry name" value="PRK00277.1"/>
    <property type="match status" value="1"/>
</dbReference>
<dbReference type="NCBIfam" id="NF009205">
    <property type="entry name" value="PRK12553.1"/>
    <property type="match status" value="1"/>
</dbReference>
<dbReference type="PANTHER" id="PTHR10381">
    <property type="entry name" value="ATP-DEPENDENT CLP PROTEASE PROTEOLYTIC SUBUNIT"/>
    <property type="match status" value="1"/>
</dbReference>
<dbReference type="PANTHER" id="PTHR10381:SF70">
    <property type="entry name" value="ATP-DEPENDENT CLP PROTEASE PROTEOLYTIC SUBUNIT"/>
    <property type="match status" value="1"/>
</dbReference>
<dbReference type="Pfam" id="PF00574">
    <property type="entry name" value="CLP_protease"/>
    <property type="match status" value="1"/>
</dbReference>
<dbReference type="PRINTS" id="PR00127">
    <property type="entry name" value="CLPPROTEASEP"/>
</dbReference>
<dbReference type="SUPFAM" id="SSF52096">
    <property type="entry name" value="ClpP/crotonase"/>
    <property type="match status" value="1"/>
</dbReference>
<dbReference type="PROSITE" id="PS00382">
    <property type="entry name" value="CLP_PROTEASE_HIS"/>
    <property type="match status" value="1"/>
</dbReference>
<sequence>MINTKCIHPVQNKWKGDLPCSGPGVLPTVIEQSGRGERAFDIYSRLLRERIIFLGTDVNDQIADALVAQMLFLEAEDPEKDIQLYINSPGGSVTAGLAIYDTMQQVNPDIVTMCYGLAASMGAFLLAGGSKGKRLALPNSRIMIHQPLGGAQGQAVEIEIQAKEILFLKETLNNLLAEHTGQSLEKISEDTDRDHFLSPQEAVEYGLIDKVVNSLN</sequence>
<comment type="function">
    <text evidence="1">Cleaves peptides in various proteins in a process that requires ATP hydrolysis. Has a chymotrypsin-like activity. Plays a major role in the degradation of misfolded proteins.</text>
</comment>
<comment type="catalytic activity">
    <reaction evidence="1">
        <text>Hydrolysis of proteins to small peptides in the presence of ATP and magnesium. alpha-casein is the usual test substrate. In the absence of ATP, only oligopeptides shorter than five residues are hydrolyzed (such as succinyl-Leu-Tyr-|-NHMec, and Leu-Tyr-Leu-|-Tyr-Trp, in which cleavage of the -Tyr-|-Leu- and -Tyr-|-Trp bonds also occurs).</text>
        <dbReference type="EC" id="3.4.21.92"/>
    </reaction>
</comment>
<comment type="subunit">
    <text evidence="1">Fourteen ClpP subunits assemble into 2 heptameric rings which stack back to back to give a disk-like structure with a central cavity, resembling the structure of eukaryotic proteasomes.</text>
</comment>
<comment type="subcellular location">
    <subcellularLocation>
        <location evidence="1">Cytoplasm</location>
    </subcellularLocation>
</comment>
<comment type="similarity">
    <text evidence="1">Belongs to the peptidase S14 family.</text>
</comment>
<gene>
    <name evidence="1" type="primary">clpP3</name>
    <name type="ordered locus">Pro_1816</name>
</gene>
<feature type="chain" id="PRO_0000179619" description="ATP-dependent Clp protease proteolytic subunit 3">
    <location>
        <begin position="1"/>
        <end position="216"/>
    </location>
</feature>
<feature type="active site" description="Nucleophile" evidence="1">
    <location>
        <position position="120"/>
    </location>
</feature>
<feature type="active site" evidence="1">
    <location>
        <position position="145"/>
    </location>
</feature>
<organism>
    <name type="scientific">Prochlorococcus marinus (strain SARG / CCMP1375 / SS120)</name>
    <dbReference type="NCBI Taxonomy" id="167539"/>
    <lineage>
        <taxon>Bacteria</taxon>
        <taxon>Bacillati</taxon>
        <taxon>Cyanobacteriota</taxon>
        <taxon>Cyanophyceae</taxon>
        <taxon>Synechococcales</taxon>
        <taxon>Prochlorococcaceae</taxon>
        <taxon>Prochlorococcus</taxon>
    </lineage>
</organism>
<keyword id="KW-0963">Cytoplasm</keyword>
<keyword id="KW-0378">Hydrolase</keyword>
<keyword id="KW-0645">Protease</keyword>
<keyword id="KW-1185">Reference proteome</keyword>
<keyword id="KW-0720">Serine protease</keyword>
<name>CLPP3_PROMA</name>
<evidence type="ECO:0000255" key="1">
    <source>
        <dbReference type="HAMAP-Rule" id="MF_00444"/>
    </source>
</evidence>
<accession>Q7V9L6</accession>